<organism>
    <name type="scientific">Influenza A virus (strain A/Budgerigar/Hokkaido/1/1977 H4N6)</name>
    <dbReference type="NCBI Taxonomy" id="385587"/>
    <lineage>
        <taxon>Viruses</taxon>
        <taxon>Riboviria</taxon>
        <taxon>Orthornavirae</taxon>
        <taxon>Negarnaviricota</taxon>
        <taxon>Polyploviricotina</taxon>
        <taxon>Insthoviricetes</taxon>
        <taxon>Articulavirales</taxon>
        <taxon>Orthomyxoviridae</taxon>
        <taxon>Alphainfluenzavirus</taxon>
        <taxon>Alphainfluenzavirus influenzae</taxon>
        <taxon>Influenza A virus</taxon>
    </lineage>
</organism>
<name>NRAM_I77AG</name>
<accession>Q6XV28</accession>
<sequence length="470" mass="51832">MNPNQKIICISATGMTLSVVSLLIGIANLGLNIGLHYKVGDTPDANTPNVNETNSTTTIINNNTQNNFTNITNIIVSKNEERTFLNLTKPLCEVNSWHILSKDNAIRIGEDAHILVTREPYLSCDPQGCRMFALSQGTTLRGRHANGTIHDRSPFRALISWEMGQAPSPYNVRVECIGWSSTSCHDGISRMSICMSGPNNNASAVVWYGGRPVTEIPSWAGNILRTQESECVCHRGICPVVMTDGPANNRAATKIIYFKEGKIQKIEELAGNAQHIEECSCYGAVGMIKCICRDNWKGANRPVITIDSEMMTHTSKYLCSKVLTDTSRPNDPTNGDCDAPITGGSPDPGVKGFAFLDGENSWLGRTISKDSRSGYEMLKVPNAETDTRSEPTSHQVIINNQNWSGYSGAFIDYWANKECFNPCFYVELIRGRPKESSVLWTSNSIVALCGSRERLGSWSWHDGAEIIYFK</sequence>
<proteinExistence type="inferred from homology"/>
<comment type="function">
    <text evidence="1">Catalyzes the removal of terminal sialic acid residues from viral and cellular glycoconjugates. Cleaves off the terminal sialic acids on the glycosylated HA during virus budding to facilitate virus release. Additionally helps virus spread through the circulation by further removing sialic acids from the cell surface. These cleavages prevent self-aggregation and ensure the efficient spread of the progeny virus from cell to cell. Otherwise, infection would be limited to one round of replication. Described as a receptor-destroying enzyme because it cleaves a terminal sialic acid from the cellular receptors. May facilitate viral invasion of the upper airways by cleaving the sialic acid moieties on the mucin of the airway epithelial cells. Likely to plays a role in the budding process through its association with lipid rafts during intracellular transport. May additionally display a raft-association independent effect on budding. Plays a role in the determination of host range restriction on replication and virulence. Sialidase activity in late endosome/lysosome traffic seems to enhance virus replication.</text>
</comment>
<comment type="catalytic activity">
    <reaction evidence="1">
        <text>Hydrolysis of alpha-(2-&gt;3)-, alpha-(2-&gt;6)-, alpha-(2-&gt;8)- glycosidic linkages of terminal sialic acid residues in oligosaccharides, glycoproteins, glycolipids, colominic acid and synthetic substrates.</text>
        <dbReference type="EC" id="3.2.1.18"/>
    </reaction>
</comment>
<comment type="cofactor">
    <cofactor evidence="1">
        <name>Ca(2+)</name>
        <dbReference type="ChEBI" id="CHEBI:29108"/>
    </cofactor>
</comment>
<comment type="activity regulation">
    <text evidence="1">Inhibited by the neuraminidase inhibitors zanamivir (Relenza) and oseltamivir (Tamiflu). These drugs interfere with the release of progeny virus from infected cells and are effective against all influenza strains. Resistance to neuraminidase inhibitors is quite rare.</text>
</comment>
<comment type="subunit">
    <text evidence="1">Homotetramer.</text>
</comment>
<comment type="subcellular location">
    <subcellularLocation>
        <location evidence="1">Virion membrane</location>
    </subcellularLocation>
    <subcellularLocation>
        <location evidence="1">Host apical cell membrane</location>
        <topology evidence="1">Single-pass type II membrane protein</topology>
    </subcellularLocation>
    <text evidence="1">Preferentially accumulates at the apical plasma membrane in infected polarized epithelial cells, which is the virus assembly site. Uses lipid rafts for cell surface transport and apical sorting. In the virion, forms a mushroom-shaped spike on the surface of the membrane.</text>
</comment>
<comment type="domain">
    <text evidence="1">Intact N-terminus is essential for virion morphogenesis. Possesses two apical sorting signals, one in the ectodomain, which is likely to be a glycan, and the other in the transmembrane domain. The transmembrane domain also plays a role in lipid raft association.</text>
</comment>
<comment type="PTM">
    <text evidence="1">N-glycosylated.</text>
</comment>
<comment type="miscellaneous">
    <text>The influenza A genome consist of 8 RNA segments. Genetic variation of hemagglutinin and/or neuraminidase genes results in the emergence of new influenza strains. The mechanism of variation can be the result of point mutations or the result of genetic reassortment between segments of two different strains.</text>
</comment>
<comment type="similarity">
    <text evidence="1">Belongs to the glycosyl hydrolase 34 family.</text>
</comment>
<gene>
    <name evidence="1" type="primary">NA</name>
</gene>
<organismHost>
    <name type="scientific">Aves</name>
    <dbReference type="NCBI Taxonomy" id="8782"/>
</organismHost>
<organismHost>
    <name type="scientific">Sus scrofa</name>
    <name type="common">Pig</name>
    <dbReference type="NCBI Taxonomy" id="9823"/>
</organismHost>
<evidence type="ECO:0000255" key="1">
    <source>
        <dbReference type="HAMAP-Rule" id="MF_04071"/>
    </source>
</evidence>
<feature type="chain" id="PRO_0000280122" description="Neuraminidase">
    <location>
        <begin position="1"/>
        <end position="470"/>
    </location>
</feature>
<feature type="topological domain" description="Intravirion" evidence="1">
    <location>
        <begin position="1"/>
        <end position="6"/>
    </location>
</feature>
<feature type="transmembrane region" description="Helical" evidence="1">
    <location>
        <begin position="7"/>
        <end position="27"/>
    </location>
</feature>
<feature type="topological domain" description="Virion surface" evidence="1">
    <location>
        <begin position="28"/>
        <end position="470"/>
    </location>
</feature>
<feature type="region of interest" description="Involved in apical transport and lipid raft association" evidence="1">
    <location>
        <begin position="11"/>
        <end position="33"/>
    </location>
</feature>
<feature type="region of interest" description="Hypervariable stalk region" evidence="1">
    <location>
        <begin position="36"/>
        <end position="88"/>
    </location>
</feature>
<feature type="region of interest" description="Head of neuraminidase" evidence="1">
    <location>
        <begin position="91"/>
        <end position="470"/>
    </location>
</feature>
<feature type="active site" description="Proton donor/acceptor" evidence="1">
    <location>
        <position position="151"/>
    </location>
</feature>
<feature type="active site" description="Nucleophile" evidence="1">
    <location>
        <position position="406"/>
    </location>
</feature>
<feature type="binding site" evidence="1">
    <location>
        <position position="118"/>
    </location>
    <ligand>
        <name>substrate</name>
    </ligand>
</feature>
<feature type="binding site" evidence="1">
    <location>
        <position position="152"/>
    </location>
    <ligand>
        <name>substrate</name>
    </ligand>
</feature>
<feature type="binding site" evidence="1">
    <location>
        <begin position="277"/>
        <end position="278"/>
    </location>
    <ligand>
        <name>substrate</name>
    </ligand>
</feature>
<feature type="binding site" evidence="1">
    <location>
        <position position="293"/>
    </location>
    <ligand>
        <name>substrate</name>
    </ligand>
</feature>
<feature type="binding site" evidence="1">
    <location>
        <position position="294"/>
    </location>
    <ligand>
        <name>Ca(2+)</name>
        <dbReference type="ChEBI" id="CHEBI:29108"/>
    </ligand>
</feature>
<feature type="binding site" evidence="1">
    <location>
        <position position="298"/>
    </location>
    <ligand>
        <name>Ca(2+)</name>
        <dbReference type="ChEBI" id="CHEBI:29108"/>
    </ligand>
</feature>
<feature type="binding site" evidence="1">
    <location>
        <position position="325"/>
    </location>
    <ligand>
        <name>Ca(2+)</name>
        <dbReference type="ChEBI" id="CHEBI:29108"/>
    </ligand>
</feature>
<feature type="binding site" evidence="1">
    <location>
        <position position="372"/>
    </location>
    <ligand>
        <name>substrate</name>
    </ligand>
</feature>
<feature type="glycosylation site" description="N-linked (GlcNAc...) asparagine; by host" evidence="1">
    <location>
        <position position="51"/>
    </location>
</feature>
<feature type="glycosylation site" description="N-linked (GlcNAc...) asparagine; by host" evidence="1">
    <location>
        <position position="54"/>
    </location>
</feature>
<feature type="glycosylation site" description="N-linked (GlcNAc...) asparagine; by host" evidence="1">
    <location>
        <position position="62"/>
    </location>
</feature>
<feature type="glycosylation site" description="N-linked (GlcNAc...) asparagine; by host" evidence="1">
    <location>
        <position position="67"/>
    </location>
</feature>
<feature type="glycosylation site" description="N-linked (GlcNAc...) asparagine; by host" evidence="1">
    <location>
        <position position="70"/>
    </location>
</feature>
<feature type="glycosylation site" description="N-linked (GlcNAc...) asparagine; by host" evidence="1">
    <location>
        <position position="86"/>
    </location>
</feature>
<feature type="glycosylation site" description="N-linked (GlcNAc...) asparagine; by host" evidence="1">
    <location>
        <position position="146"/>
    </location>
</feature>
<feature type="glycosylation site" description="N-linked (GlcNAc...) asparagine; by host" evidence="1">
    <location>
        <position position="201"/>
    </location>
</feature>
<feature type="glycosylation site" description="N-linked (GlcNAc...) asparagine; by host" evidence="1">
    <location>
        <position position="402"/>
    </location>
</feature>
<feature type="disulfide bond" evidence="1">
    <location>
        <begin position="92"/>
        <end position="419"/>
    </location>
</feature>
<feature type="disulfide bond" evidence="1">
    <location>
        <begin position="124"/>
        <end position="129"/>
    </location>
</feature>
<feature type="disulfide bond" evidence="1">
    <location>
        <begin position="184"/>
        <end position="231"/>
    </location>
</feature>
<feature type="disulfide bond" evidence="1">
    <location>
        <begin position="233"/>
        <end position="238"/>
    </location>
</feature>
<feature type="disulfide bond" evidence="1">
    <location>
        <begin position="279"/>
        <end position="292"/>
    </location>
</feature>
<feature type="disulfide bond" evidence="1">
    <location>
        <begin position="281"/>
        <end position="290"/>
    </location>
</feature>
<feature type="disulfide bond" evidence="1">
    <location>
        <begin position="319"/>
        <end position="337"/>
    </location>
</feature>
<feature type="disulfide bond" evidence="1">
    <location>
        <begin position="423"/>
        <end position="449"/>
    </location>
</feature>
<keyword id="KW-0106">Calcium</keyword>
<keyword id="KW-1015">Disulfide bond</keyword>
<keyword id="KW-0325">Glycoprotein</keyword>
<keyword id="KW-0326">Glycosidase</keyword>
<keyword id="KW-1032">Host cell membrane</keyword>
<keyword id="KW-1043">Host membrane</keyword>
<keyword id="KW-0378">Hydrolase</keyword>
<keyword id="KW-0472">Membrane</keyword>
<keyword id="KW-0479">Metal-binding</keyword>
<keyword id="KW-0735">Signal-anchor</keyword>
<keyword id="KW-0812">Transmembrane</keyword>
<keyword id="KW-1133">Transmembrane helix</keyword>
<keyword id="KW-0946">Virion</keyword>
<dbReference type="EC" id="3.2.1.18" evidence="1"/>
<dbReference type="EMBL" id="AY207548">
    <property type="protein sequence ID" value="AAO62062.1"/>
    <property type="molecule type" value="Genomic_DNA"/>
</dbReference>
<dbReference type="SMR" id="Q6XV28"/>
<dbReference type="BindingDB" id="Q6XV28"/>
<dbReference type="ChEMBL" id="CHEMBL4295612"/>
<dbReference type="DrugCentral" id="Q6XV28"/>
<dbReference type="CAZy" id="GH34">
    <property type="family name" value="Glycoside Hydrolase Family 34"/>
</dbReference>
<dbReference type="GlyCosmos" id="Q6XV28">
    <property type="glycosylation" value="9 sites, No reported glycans"/>
</dbReference>
<dbReference type="GO" id="GO:0020002">
    <property type="term" value="C:host cell plasma membrane"/>
    <property type="evidence" value="ECO:0007669"/>
    <property type="project" value="UniProtKB-SubCell"/>
</dbReference>
<dbReference type="GO" id="GO:0016020">
    <property type="term" value="C:membrane"/>
    <property type="evidence" value="ECO:0007669"/>
    <property type="project" value="UniProtKB-UniRule"/>
</dbReference>
<dbReference type="GO" id="GO:0055036">
    <property type="term" value="C:virion membrane"/>
    <property type="evidence" value="ECO:0007669"/>
    <property type="project" value="UniProtKB-SubCell"/>
</dbReference>
<dbReference type="GO" id="GO:0004308">
    <property type="term" value="F:exo-alpha-sialidase activity"/>
    <property type="evidence" value="ECO:0007669"/>
    <property type="project" value="UniProtKB-UniRule"/>
</dbReference>
<dbReference type="GO" id="GO:0046872">
    <property type="term" value="F:metal ion binding"/>
    <property type="evidence" value="ECO:0007669"/>
    <property type="project" value="UniProtKB-UniRule"/>
</dbReference>
<dbReference type="GO" id="GO:0005975">
    <property type="term" value="P:carbohydrate metabolic process"/>
    <property type="evidence" value="ECO:0007669"/>
    <property type="project" value="InterPro"/>
</dbReference>
<dbReference type="GO" id="GO:0046761">
    <property type="term" value="P:viral budding from plasma membrane"/>
    <property type="evidence" value="ECO:0007669"/>
    <property type="project" value="UniProtKB-UniRule"/>
</dbReference>
<dbReference type="Gene3D" id="2.120.10.10">
    <property type="match status" value="1"/>
</dbReference>
<dbReference type="HAMAP" id="MF_04071">
    <property type="entry name" value="INFV_NRAM"/>
    <property type="match status" value="1"/>
</dbReference>
<dbReference type="InterPro" id="IPR001860">
    <property type="entry name" value="Glyco_hydro_34"/>
</dbReference>
<dbReference type="InterPro" id="IPR036278">
    <property type="entry name" value="Sialidase_sf"/>
</dbReference>
<dbReference type="Pfam" id="PF00064">
    <property type="entry name" value="Neur"/>
    <property type="match status" value="1"/>
</dbReference>
<dbReference type="SUPFAM" id="SSF50939">
    <property type="entry name" value="Sialidases"/>
    <property type="match status" value="1"/>
</dbReference>
<reference key="1">
    <citation type="submission" date="2002-12" db="EMBL/GenBank/DDBJ databases">
        <title>Genetic analysis of multiple N3, N4, and N6 influenza A virus neuraminidase genes.</title>
        <authorList>
            <person name="Webby R.J."/>
            <person name="Humberd J.L."/>
            <person name="Krauss S.L."/>
        </authorList>
    </citation>
    <scope>NUCLEOTIDE SEQUENCE [GENOMIC RNA]</scope>
</reference>
<reference key="2">
    <citation type="journal article" date="2004" name="Virus Res.">
        <title>Assembly and budding of influenza virus.</title>
        <authorList>
            <person name="Nayak D.P."/>
            <person name="Hui E.K."/>
            <person name="Barman S."/>
        </authorList>
    </citation>
    <scope>REVIEW</scope>
</reference>
<reference key="3">
    <citation type="journal article" date="2005" name="N. Engl. J. Med.">
        <title>Neuraminidase inhibitors for influenza.</title>
        <authorList>
            <person name="Moscona A."/>
        </authorList>
    </citation>
    <scope>REVIEW</scope>
</reference>
<reference key="4">
    <citation type="journal article" date="2005" name="Biol. Pharm. Bull.">
        <title>Sialobiology of influenza: molecular mechanism of host range variation of influenza viruses.</title>
        <authorList>
            <person name="Suzuki Y."/>
        </authorList>
    </citation>
    <scope>REVIEW</scope>
</reference>
<protein>
    <recommendedName>
        <fullName evidence="1">Neuraminidase</fullName>
        <ecNumber evidence="1">3.2.1.18</ecNumber>
    </recommendedName>
</protein>